<reference key="1">
    <citation type="journal article" date="2014" name="Stand. Genomic Sci.">
        <title>Complete genome sequence of Burkholderia phymatum STM815(T), a broad host range and efficient nitrogen-fixing symbiont of Mimosa species.</title>
        <authorList>
            <person name="Moulin L."/>
            <person name="Klonowska A."/>
            <person name="Caroline B."/>
            <person name="Booth K."/>
            <person name="Vriezen J.A."/>
            <person name="Melkonian R."/>
            <person name="James E.K."/>
            <person name="Young J.P."/>
            <person name="Bena G."/>
            <person name="Hauser L."/>
            <person name="Land M."/>
            <person name="Kyrpides N."/>
            <person name="Bruce D."/>
            <person name="Chain P."/>
            <person name="Copeland A."/>
            <person name="Pitluck S."/>
            <person name="Woyke T."/>
            <person name="Lizotte-Waniewski M."/>
            <person name="Bristow J."/>
            <person name="Riley M."/>
        </authorList>
    </citation>
    <scope>NUCLEOTIDE SEQUENCE [LARGE SCALE GENOMIC DNA]</scope>
    <source>
        <strain>DSM 17167 / CIP 108236 / LMG 21445 / STM815</strain>
    </source>
</reference>
<feature type="chain" id="PRO_1000136932" description="Cell division protein ZapD">
    <location>
        <begin position="1"/>
        <end position="251"/>
    </location>
</feature>
<accession>B2JHE6</accession>
<proteinExistence type="inferred from homology"/>
<gene>
    <name evidence="1" type="primary">zapD</name>
    <name type="ordered locus">Bphy_2659</name>
</gene>
<protein>
    <recommendedName>
        <fullName evidence="1">Cell division protein ZapD</fullName>
    </recommendedName>
    <alternativeName>
        <fullName evidence="1">Z ring-associated protein D</fullName>
    </alternativeName>
</protein>
<comment type="function">
    <text evidence="1">Cell division factor that enhances FtsZ-ring assembly. Directly interacts with FtsZ and promotes bundling of FtsZ protofilaments, with a reduction in FtsZ GTPase activity.</text>
</comment>
<comment type="subunit">
    <text evidence="1">Interacts with FtsZ.</text>
</comment>
<comment type="subcellular location">
    <subcellularLocation>
        <location evidence="1">Cytoplasm</location>
    </subcellularLocation>
    <text evidence="1">Localizes to mid-cell in an FtsZ-dependent manner.</text>
</comment>
<comment type="similarity">
    <text evidence="1">Belongs to the ZapD family.</text>
</comment>
<evidence type="ECO:0000255" key="1">
    <source>
        <dbReference type="HAMAP-Rule" id="MF_01092"/>
    </source>
</evidence>
<name>ZAPD_PARP8</name>
<organism>
    <name type="scientific">Paraburkholderia phymatum (strain DSM 17167 / CIP 108236 / LMG 21445 / STM815)</name>
    <name type="common">Burkholderia phymatum</name>
    <dbReference type="NCBI Taxonomy" id="391038"/>
    <lineage>
        <taxon>Bacteria</taxon>
        <taxon>Pseudomonadati</taxon>
        <taxon>Pseudomonadota</taxon>
        <taxon>Betaproteobacteria</taxon>
        <taxon>Burkholderiales</taxon>
        <taxon>Burkholderiaceae</taxon>
        <taxon>Paraburkholderia</taxon>
    </lineage>
</organism>
<dbReference type="EMBL" id="CP001043">
    <property type="protein sequence ID" value="ACC71831.1"/>
    <property type="molecule type" value="Genomic_DNA"/>
</dbReference>
<dbReference type="RefSeq" id="WP_012402032.1">
    <property type="nucleotide sequence ID" value="NC_010622.1"/>
</dbReference>
<dbReference type="SMR" id="B2JHE6"/>
<dbReference type="STRING" id="391038.Bphy_2659"/>
<dbReference type="KEGG" id="bph:Bphy_2659"/>
<dbReference type="eggNOG" id="COG4582">
    <property type="taxonomic scope" value="Bacteria"/>
</dbReference>
<dbReference type="HOGENOM" id="CLU_076303_0_1_4"/>
<dbReference type="OrthoDB" id="5294622at2"/>
<dbReference type="Proteomes" id="UP000001192">
    <property type="component" value="Chromosome 1"/>
</dbReference>
<dbReference type="GO" id="GO:0032153">
    <property type="term" value="C:cell division site"/>
    <property type="evidence" value="ECO:0007669"/>
    <property type="project" value="TreeGrafter"/>
</dbReference>
<dbReference type="GO" id="GO:0005737">
    <property type="term" value="C:cytoplasm"/>
    <property type="evidence" value="ECO:0007669"/>
    <property type="project" value="UniProtKB-SubCell"/>
</dbReference>
<dbReference type="GO" id="GO:0000917">
    <property type="term" value="P:division septum assembly"/>
    <property type="evidence" value="ECO:0007669"/>
    <property type="project" value="UniProtKB-KW"/>
</dbReference>
<dbReference type="GO" id="GO:0043093">
    <property type="term" value="P:FtsZ-dependent cytokinesis"/>
    <property type="evidence" value="ECO:0007669"/>
    <property type="project" value="UniProtKB-UniRule"/>
</dbReference>
<dbReference type="Gene3D" id="1.10.3900.10">
    <property type="entry name" value="YacF-like"/>
    <property type="match status" value="1"/>
</dbReference>
<dbReference type="Gene3D" id="2.60.440.10">
    <property type="entry name" value="YacF-like domains"/>
    <property type="match status" value="1"/>
</dbReference>
<dbReference type="HAMAP" id="MF_01092">
    <property type="entry name" value="ZapD"/>
    <property type="match status" value="1"/>
</dbReference>
<dbReference type="InterPro" id="IPR009777">
    <property type="entry name" value="ZapD"/>
</dbReference>
<dbReference type="InterPro" id="IPR027462">
    <property type="entry name" value="ZapD_C"/>
</dbReference>
<dbReference type="InterPro" id="IPR036268">
    <property type="entry name" value="ZapD_sf"/>
</dbReference>
<dbReference type="NCBIfam" id="NF003656">
    <property type="entry name" value="PRK05287.1-4"/>
    <property type="match status" value="1"/>
</dbReference>
<dbReference type="PANTHER" id="PTHR39455">
    <property type="entry name" value="CELL DIVISION PROTEIN ZAPD"/>
    <property type="match status" value="1"/>
</dbReference>
<dbReference type="PANTHER" id="PTHR39455:SF1">
    <property type="entry name" value="CELL DIVISION PROTEIN ZAPD"/>
    <property type="match status" value="1"/>
</dbReference>
<dbReference type="Pfam" id="PF07072">
    <property type="entry name" value="ZapD"/>
    <property type="match status" value="1"/>
</dbReference>
<dbReference type="SUPFAM" id="SSF160950">
    <property type="entry name" value="YacF-like"/>
    <property type="match status" value="1"/>
</dbReference>
<sequence>MILYEYPFNERIRTLLRLEDLFERFTFFLTQEDAREHHVALTTLFEIAEVAGRADLKSDLMKELERQRQTLAPFRGNPGIEQNALEAVLGEMEQTLAGLTQMQGKTGQHLADNEWLASIRSRAIIPGGTCKFDLPSYYAWQQTHPDQRRQDIAKWIMPLLPLRDAAAIVLRLARESGQASKVMAMQGSYQQMLSGRTYQLMQVRVAPELRVIPEASANKYMLWVRFTVQDGDLRPRAVDVDVPFQLTLCSL</sequence>
<keyword id="KW-0131">Cell cycle</keyword>
<keyword id="KW-0132">Cell division</keyword>
<keyword id="KW-0963">Cytoplasm</keyword>
<keyword id="KW-1185">Reference proteome</keyword>
<keyword id="KW-0717">Septation</keyword>